<comment type="function">
    <text evidence="1 6">Essential for maintaining proper cardiac intercalated disk (ICD) structure and function as well as cardiac conduction velocity in the heart. Its association with SCN1B is required for stabilizing the perinexus in the ICD and for localization of GJA1 and SCN5A to the ICD. May regulate the function of the gap junction protein GJA1 and may contribute to the stability and proper localization of GJA1 to cardiac intercalated disk thereby regulating gap junction communication (By similarity). May also play a role in the regulation of mitochondrial respiration and mitochondrial DNA copy number maintenance (PubMed:28295037).</text>
</comment>
<comment type="subunit">
    <text evidence="1 5">Monomer (By similarity). Homodimer (PubMed:26403541). Interacts with GJA1 (By similarity). Interacts weakly with DSP (By similarity). Interacts with SCN1B (By similarity).</text>
</comment>
<comment type="interaction">
    <interactant intactId="EBI-6656213">
        <id>Q6PI78</id>
    </interactant>
    <interactant intactId="EBI-348517">
        <id>O95870</id>
        <label>ABHD16A</label>
    </interactant>
    <organismsDiffer>false</organismsDiffer>
    <experiments>3</experiments>
</comment>
<comment type="interaction">
    <interactant intactId="EBI-6656213">
        <id>Q6PI78</id>
    </interactant>
    <interactant intactId="EBI-13059134">
        <id>Q13520</id>
        <label>AQP6</label>
    </interactant>
    <organismsDiffer>false</organismsDiffer>
    <experiments>3</experiments>
</comment>
<comment type="interaction">
    <interactant intactId="EBI-6656213">
        <id>Q6PI78</id>
    </interactant>
    <interactant intactId="EBI-11343438">
        <id>Q3SXY8</id>
        <label>ARL13B</label>
    </interactant>
    <organismsDiffer>false</organismsDiffer>
    <experiments>3</experiments>
</comment>
<comment type="interaction">
    <interactant intactId="EBI-6656213">
        <id>Q6PI78</id>
    </interactant>
    <interactant intactId="EBI-8646596">
        <id>P49447</id>
        <label>CYB561</label>
    </interactant>
    <organismsDiffer>false</organismsDiffer>
    <experiments>3</experiments>
</comment>
<comment type="interaction">
    <interactant intactId="EBI-6656213">
        <id>Q6PI78</id>
    </interactant>
    <interactant intactId="EBI-8637742">
        <id>Q53TN4</id>
        <label>CYBRD1</label>
    </interactant>
    <organismsDiffer>false</organismsDiffer>
    <experiments>3</experiments>
</comment>
<comment type="interaction">
    <interactant intactId="EBI-6656213">
        <id>Q6PI78</id>
    </interactant>
    <interactant intactId="EBI-3915253">
        <id>Q15125</id>
        <label>EBP</label>
    </interactant>
    <organismsDiffer>false</organismsDiffer>
    <experiments>3</experiments>
</comment>
<comment type="interaction">
    <interactant intactId="EBI-6656213">
        <id>Q6PI78</id>
    </interactant>
    <interactant intactId="EBI-781551">
        <id>Q9Y282</id>
        <label>ERGIC3</label>
    </interactant>
    <organismsDiffer>false</organismsDiffer>
    <experiments>3</experiments>
</comment>
<comment type="interaction">
    <interactant intactId="EBI-6656213">
        <id>Q6PI78</id>
    </interactant>
    <interactant intactId="EBI-18636064">
        <id>Q8TBP5</id>
        <label>FAM174A</label>
    </interactant>
    <organismsDiffer>false</organismsDiffer>
    <experiments>3</experiments>
</comment>
<comment type="interaction">
    <interactant intactId="EBI-6656213">
        <id>Q6PI78</id>
    </interactant>
    <interactant intactId="EBI-18304435">
        <id>Q5JX71</id>
        <label>FAM209A</label>
    </interactant>
    <organismsDiffer>false</organismsDiffer>
    <experiments>3</experiments>
</comment>
<comment type="interaction">
    <interactant intactId="EBI-6656213">
        <id>Q6PI78</id>
    </interactant>
    <interactant intactId="EBI-17458373">
        <id>P48165</id>
        <label>GJA8</label>
    </interactant>
    <organismsDiffer>false</organismsDiffer>
    <experiments>3</experiments>
</comment>
<comment type="interaction">
    <interactant intactId="EBI-6656213">
        <id>Q6PI78</id>
    </interactant>
    <interactant intactId="EBI-18076404">
        <id>O15529</id>
        <label>GPR42</label>
    </interactant>
    <organismsDiffer>false</organismsDiffer>
    <experiments>3</experiments>
</comment>
<comment type="interaction">
    <interactant intactId="EBI-6656213">
        <id>Q6PI78</id>
    </interactant>
    <interactant intactId="EBI-1052304">
        <id>Q8NBQ5</id>
        <label>HSD17B11</label>
    </interactant>
    <organismsDiffer>false</organismsDiffer>
    <experiments>3</experiments>
</comment>
<comment type="interaction">
    <interactant intactId="EBI-6656213">
        <id>Q6PI78</id>
    </interactant>
    <interactant intactId="EBI-17451184">
        <id>Q9P2J2-2</id>
        <label>IGSF9</label>
    </interactant>
    <organismsDiffer>false</organismsDiffer>
    <experiments>3</experiments>
</comment>
<comment type="interaction">
    <interactant intactId="EBI-6656213">
        <id>Q6PI78</id>
    </interactant>
    <interactant intactId="EBI-1757512">
        <id>P26951</id>
        <label>IL3RA</label>
    </interactant>
    <organismsDiffer>false</organismsDiffer>
    <experiments>3</experiments>
</comment>
<comment type="interaction">
    <interactant intactId="EBI-6656213">
        <id>Q6PI78</id>
    </interactant>
    <interactant intactId="EBI-10266796">
        <id>Q8N5M9</id>
        <label>JAGN1</label>
    </interactant>
    <organismsDiffer>false</organismsDiffer>
    <experiments>3</experiments>
</comment>
<comment type="interaction">
    <interactant intactId="EBI-6656213">
        <id>Q6PI78</id>
    </interactant>
    <interactant intactId="EBI-465137">
        <id>Q9HDC5</id>
        <label>JPH1</label>
    </interactant>
    <organismsDiffer>false</organismsDiffer>
    <experiments>3</experiments>
</comment>
<comment type="interaction">
    <interactant intactId="EBI-6656213">
        <id>Q6PI78</id>
    </interactant>
    <interactant intactId="EBI-949102">
        <id>Q15800</id>
        <label>MSMO1</label>
    </interactant>
    <organismsDiffer>false</organismsDiffer>
    <experiments>3</experiments>
</comment>
<comment type="interaction">
    <interactant intactId="EBI-6656213">
        <id>Q6PI78</id>
    </interactant>
    <interactant intactId="EBI-716063">
        <id>Q13113</id>
        <label>PDZK1IP1</label>
    </interactant>
    <organismsDiffer>false</organismsDiffer>
    <experiments>3</experiments>
</comment>
<comment type="interaction">
    <interactant intactId="EBI-6656213">
        <id>Q6PI78</id>
    </interactant>
    <interactant intactId="EBI-11161398">
        <id>O14684</id>
        <label>PTGES</label>
    </interactant>
    <organismsDiffer>false</organismsDiffer>
    <experiments>3</experiments>
</comment>
<comment type="interaction">
    <interactant intactId="EBI-6656213">
        <id>Q6PI78</id>
    </interactant>
    <interactant intactId="EBI-3919694">
        <id>P15151</id>
        <label>PVR</label>
    </interactant>
    <organismsDiffer>false</organismsDiffer>
    <experiments>3</experiments>
</comment>
<comment type="interaction">
    <interactant intactId="EBI-6656213">
        <id>Q6PI78</id>
    </interactant>
    <interactant intactId="EBI-7545592">
        <id>Q9H6H4</id>
        <label>REEP4</label>
    </interactant>
    <organismsDiffer>false</organismsDiffer>
    <experiments>3</experiments>
</comment>
<comment type="interaction">
    <interactant intactId="EBI-6656213">
        <id>Q6PI78</id>
    </interactant>
    <interactant intactId="EBI-10192441">
        <id>Q86VR2</id>
        <label>RETREG3</label>
    </interactant>
    <organismsDiffer>false</organismsDiffer>
    <experiments>3</experiments>
</comment>
<comment type="interaction">
    <interactant intactId="EBI-6656213">
        <id>Q6PI78</id>
    </interactant>
    <interactant intactId="EBI-17247926">
        <id>Q9NY72</id>
        <label>SCN3B</label>
    </interactant>
    <organismsDiffer>false</organismsDiffer>
    <experiments>3</experiments>
</comment>
<comment type="interaction">
    <interactant intactId="EBI-6656213">
        <id>Q6PI78</id>
    </interactant>
    <interactant intactId="EBI-18159983">
        <id>Q3KNW5</id>
        <label>SLC10A6</label>
    </interactant>
    <organismsDiffer>false</organismsDiffer>
    <experiments>3</experiments>
</comment>
<comment type="interaction">
    <interactant intactId="EBI-6656213">
        <id>Q6PI78</id>
    </interactant>
    <interactant intactId="EBI-17595455">
        <id>P54219-3</id>
        <label>SLC18A1</label>
    </interactant>
    <organismsDiffer>false</organismsDiffer>
    <experiments>3</experiments>
</comment>
<comment type="interaction">
    <interactant intactId="EBI-6656213">
        <id>Q6PI78</id>
    </interactant>
    <interactant intactId="EBI-17295964">
        <id>Q9NQQ7-3</id>
        <label>SLC35C2</label>
    </interactant>
    <organismsDiffer>false</organismsDiffer>
    <experiments>3</experiments>
</comment>
<comment type="interaction">
    <interactant intactId="EBI-6656213">
        <id>Q6PI78</id>
    </interactant>
    <interactant intactId="EBI-13292283">
        <id>Q9UHI5</id>
        <label>SLC7A8</label>
    </interactant>
    <organismsDiffer>false</organismsDiffer>
    <experiments>3</experiments>
</comment>
<comment type="interaction">
    <interactant intactId="EBI-6656213">
        <id>Q6PI78</id>
    </interactant>
    <interactant intactId="EBI-6268651">
        <id>Q9NPL8</id>
        <label>TIMMDC1</label>
    </interactant>
    <organismsDiffer>false</organismsDiffer>
    <experiments>3</experiments>
</comment>
<comment type="interaction">
    <interactant intactId="EBI-6656213">
        <id>Q6PI78</id>
    </interactant>
    <interactant intactId="EBI-3922699">
        <id>Q96IK0</id>
        <label>TMEM101</label>
    </interactant>
    <organismsDiffer>false</organismsDiffer>
    <experiments>3</experiments>
</comment>
<comment type="interaction">
    <interactant intactId="EBI-6656213">
        <id>Q6PI78</id>
    </interactant>
    <interactant intactId="EBI-11742770">
        <id>Q96HE8</id>
        <label>TMEM80</label>
    </interactant>
    <organismsDiffer>false</organismsDiffer>
    <experiments>3</experiments>
</comment>
<comment type="interaction">
    <interactant intactId="EBI-6656213">
        <id>Q6PI78</id>
    </interactant>
    <interactant intactId="EBI-6447886">
        <id>Q9Y320</id>
        <label>TMX2</label>
    </interactant>
    <organismsDiffer>false</organismsDiffer>
    <experiments>3</experiments>
</comment>
<comment type="interaction">
    <interactant intactId="EBI-6656213">
        <id>Q6PI78</id>
    </interactant>
    <interactant intactId="EBI-3892947">
        <id>Q5T4F4</id>
        <label>ZFYVE27</label>
    </interactant>
    <organismsDiffer>false</organismsDiffer>
    <experiments>3</experiments>
</comment>
<comment type="subcellular location">
    <subcellularLocation>
        <location evidence="5">Cell membrane</location>
        <topology evidence="2">Multi-pass membrane protein</topology>
    </subcellularLocation>
    <subcellularLocation>
        <location evidence="4 6">Mitochondrion inner membrane</location>
        <topology evidence="2">Multi-pass membrane protein</topology>
    </subcellularLocation>
    <text evidence="5">Localizes at the intercalated disk in the ventricular tissue (PubMed:26403541).</text>
</comment>
<comment type="tissue specificity">
    <text evidence="5">Predominantly expressed the ventricular tissue (at protein level).</text>
</comment>
<comment type="disease">
    <text evidence="6">Defects in TMEM65 may cause a mitochondrial disorder characterized by a complex encephalomyopathic phenotype. Clinical features includ microcephaly, dysmorphic features, psychomotor regression, hypotonia, growth retardation, lactic acidosis, intractable seizures, dyskenetics movements, without cardiomyopathy (PubMed:28295037).</text>
</comment>
<comment type="sequence caution" evidence="7">
    <conflict type="erroneous initiation">
        <sequence resource="EMBL-CDS" id="AAH32396"/>
    </conflict>
    <text>Truncated N-terminus.</text>
</comment>
<evidence type="ECO:0000250" key="1">
    <source>
        <dbReference type="UniProtKB" id="Q4VAE3"/>
    </source>
</evidence>
<evidence type="ECO:0000255" key="2"/>
<evidence type="ECO:0000269" key="3">
    <source>
    </source>
</evidence>
<evidence type="ECO:0000269" key="4">
    <source>
    </source>
</evidence>
<evidence type="ECO:0000269" key="5">
    <source>
    </source>
</evidence>
<evidence type="ECO:0000269" key="6">
    <source>
    </source>
</evidence>
<evidence type="ECO:0000305" key="7"/>
<protein>
    <recommendedName>
        <fullName>Transmembrane protein 65</fullName>
    </recommendedName>
</protein>
<dbReference type="EMBL" id="AC090192">
    <property type="status" value="NOT_ANNOTATED_CDS"/>
    <property type="molecule type" value="Genomic_DNA"/>
</dbReference>
<dbReference type="EMBL" id="BC017881">
    <property type="protein sequence ID" value="AAH17881.1"/>
    <property type="molecule type" value="mRNA"/>
</dbReference>
<dbReference type="EMBL" id="BC032396">
    <property type="protein sequence ID" value="AAH32396.1"/>
    <property type="status" value="ALT_INIT"/>
    <property type="molecule type" value="mRNA"/>
</dbReference>
<dbReference type="EMBL" id="BC041379">
    <property type="protein sequence ID" value="AAH41379.1"/>
    <property type="molecule type" value="mRNA"/>
</dbReference>
<dbReference type="CCDS" id="CCDS6348.1"/>
<dbReference type="RefSeq" id="NP_919267.2">
    <property type="nucleotide sequence ID" value="NM_194291.3"/>
</dbReference>
<dbReference type="BioGRID" id="127596">
    <property type="interactions" value="51"/>
</dbReference>
<dbReference type="FunCoup" id="Q6PI78">
    <property type="interactions" value="257"/>
</dbReference>
<dbReference type="IntAct" id="Q6PI78">
    <property type="interactions" value="38"/>
</dbReference>
<dbReference type="MINT" id="Q6PI78"/>
<dbReference type="STRING" id="9606.ENSP00000297632"/>
<dbReference type="TCDB" id="8.A.205.1.1">
    <property type="family name" value="the tmem65 (tmem65) family"/>
</dbReference>
<dbReference type="GlyGen" id="Q6PI78">
    <property type="glycosylation" value="1 site"/>
</dbReference>
<dbReference type="iPTMnet" id="Q6PI78"/>
<dbReference type="SwissPalm" id="Q6PI78"/>
<dbReference type="BioMuta" id="TMEM65"/>
<dbReference type="DMDM" id="296452844"/>
<dbReference type="jPOST" id="Q6PI78"/>
<dbReference type="MassIVE" id="Q6PI78"/>
<dbReference type="PaxDb" id="9606-ENSP00000297632"/>
<dbReference type="PeptideAtlas" id="Q6PI78"/>
<dbReference type="ProteomicsDB" id="67144"/>
<dbReference type="Pumba" id="Q6PI78"/>
<dbReference type="TopDownProteomics" id="Q6PI78"/>
<dbReference type="Antibodypedia" id="13901">
    <property type="antibodies" value="100 antibodies from 17 providers"/>
</dbReference>
<dbReference type="DNASU" id="157378"/>
<dbReference type="Ensembl" id="ENST00000297632.8">
    <property type="protein sequence ID" value="ENSP00000297632.6"/>
    <property type="gene ID" value="ENSG00000164983.9"/>
</dbReference>
<dbReference type="GeneID" id="157378"/>
<dbReference type="KEGG" id="hsa:157378"/>
<dbReference type="MANE-Select" id="ENST00000297632.8">
    <property type="protein sequence ID" value="ENSP00000297632.6"/>
    <property type="RefSeq nucleotide sequence ID" value="NM_194291.3"/>
    <property type="RefSeq protein sequence ID" value="NP_919267.2"/>
</dbReference>
<dbReference type="UCSC" id="uc010mdl.4">
    <property type="organism name" value="human"/>
</dbReference>
<dbReference type="AGR" id="HGNC:25203"/>
<dbReference type="CTD" id="157378"/>
<dbReference type="DisGeNET" id="157378"/>
<dbReference type="GeneCards" id="TMEM65"/>
<dbReference type="HGNC" id="HGNC:25203">
    <property type="gene designation" value="TMEM65"/>
</dbReference>
<dbReference type="HPA" id="ENSG00000164983">
    <property type="expression patterns" value="Low tissue specificity"/>
</dbReference>
<dbReference type="MalaCards" id="TMEM65"/>
<dbReference type="MIM" id="616609">
    <property type="type" value="gene"/>
</dbReference>
<dbReference type="neXtProt" id="NX_Q6PI78"/>
<dbReference type="OpenTargets" id="ENSG00000164983"/>
<dbReference type="PharmGKB" id="PA142670778"/>
<dbReference type="VEuPathDB" id="HostDB:ENSG00000164983"/>
<dbReference type="eggNOG" id="KOG4619">
    <property type="taxonomic scope" value="Eukaryota"/>
</dbReference>
<dbReference type="GeneTree" id="ENSGT00390000017802"/>
<dbReference type="HOGENOM" id="CLU_075402_1_0_1"/>
<dbReference type="InParanoid" id="Q6PI78"/>
<dbReference type="OMA" id="CNLGTHP"/>
<dbReference type="OrthoDB" id="430821at2759"/>
<dbReference type="PAN-GO" id="Q6PI78">
    <property type="GO annotations" value="3 GO annotations based on evolutionary models"/>
</dbReference>
<dbReference type="PhylomeDB" id="Q6PI78"/>
<dbReference type="TreeFam" id="TF105823"/>
<dbReference type="PathwayCommons" id="Q6PI78"/>
<dbReference type="SignaLink" id="Q6PI78"/>
<dbReference type="BioGRID-ORCS" id="157378">
    <property type="hits" value="16 hits in 1165 CRISPR screens"/>
</dbReference>
<dbReference type="ChiTaRS" id="TMEM65">
    <property type="organism name" value="human"/>
</dbReference>
<dbReference type="GenomeRNAi" id="157378"/>
<dbReference type="Pharos" id="Q6PI78">
    <property type="development level" value="Tdark"/>
</dbReference>
<dbReference type="PRO" id="PR:Q6PI78"/>
<dbReference type="Proteomes" id="UP000005640">
    <property type="component" value="Chromosome 8"/>
</dbReference>
<dbReference type="RNAct" id="Q6PI78">
    <property type="molecule type" value="protein"/>
</dbReference>
<dbReference type="Bgee" id="ENSG00000164983">
    <property type="expression patterns" value="Expressed in left ventricle myocardium and 187 other cell types or tissues"/>
</dbReference>
<dbReference type="GO" id="GO:0014704">
    <property type="term" value="C:intercalated disc"/>
    <property type="evidence" value="ECO:0000314"/>
    <property type="project" value="UniProtKB"/>
</dbReference>
<dbReference type="GO" id="GO:0043231">
    <property type="term" value="C:intracellular membrane-bounded organelle"/>
    <property type="evidence" value="ECO:0000314"/>
    <property type="project" value="HPA"/>
</dbReference>
<dbReference type="GO" id="GO:0005743">
    <property type="term" value="C:mitochondrial inner membrane"/>
    <property type="evidence" value="ECO:0000314"/>
    <property type="project" value="UniProtKB"/>
</dbReference>
<dbReference type="GO" id="GO:0005739">
    <property type="term" value="C:mitochondrion"/>
    <property type="evidence" value="ECO:0006056"/>
    <property type="project" value="FlyBase"/>
</dbReference>
<dbReference type="GO" id="GO:0005730">
    <property type="term" value="C:nucleolus"/>
    <property type="evidence" value="ECO:0000314"/>
    <property type="project" value="HPA"/>
</dbReference>
<dbReference type="GO" id="GO:0005886">
    <property type="term" value="C:plasma membrane"/>
    <property type="evidence" value="ECO:0000314"/>
    <property type="project" value="UniProtKB"/>
</dbReference>
<dbReference type="GO" id="GO:0061337">
    <property type="term" value="P:cardiac conduction"/>
    <property type="evidence" value="ECO:0000250"/>
    <property type="project" value="UniProtKB"/>
</dbReference>
<dbReference type="GO" id="GO:0003231">
    <property type="term" value="P:cardiac ventricle development"/>
    <property type="evidence" value="ECO:0000250"/>
    <property type="project" value="UniProtKB"/>
</dbReference>
<dbReference type="GO" id="GO:1903779">
    <property type="term" value="P:regulation of cardiac conduction"/>
    <property type="evidence" value="ECO:0000250"/>
    <property type="project" value="UniProtKB"/>
</dbReference>
<dbReference type="InterPro" id="IPR019537">
    <property type="entry name" value="TMEM65"/>
</dbReference>
<dbReference type="PANTHER" id="PTHR21706">
    <property type="entry name" value="TRANSMEMBRANE PROTEIN 65"/>
    <property type="match status" value="1"/>
</dbReference>
<dbReference type="PANTHER" id="PTHR21706:SF15">
    <property type="entry name" value="TRANSMEMBRANE PROTEIN 65"/>
    <property type="match status" value="1"/>
</dbReference>
<dbReference type="Pfam" id="PF10507">
    <property type="entry name" value="TMEM65"/>
    <property type="match status" value="1"/>
</dbReference>
<keyword id="KW-1003">Cell membrane</keyword>
<keyword id="KW-0472">Membrane</keyword>
<keyword id="KW-0496">Mitochondrion</keyword>
<keyword id="KW-0999">Mitochondrion inner membrane</keyword>
<keyword id="KW-1267">Proteomics identification</keyword>
<keyword id="KW-1185">Reference proteome</keyword>
<keyword id="KW-0809">Transit peptide</keyword>
<keyword id="KW-0812">Transmembrane</keyword>
<keyword id="KW-1133">Transmembrane helix</keyword>
<name>TMM65_HUMAN</name>
<proteinExistence type="evidence at protein level"/>
<accession>Q6PI78</accession>
<accession>Q8N5G8</accession>
<accession>Q8WVK5</accession>
<reference key="1">
    <citation type="journal article" date="2006" name="Nature">
        <title>DNA sequence and analysis of human chromosome 8.</title>
        <authorList>
            <person name="Nusbaum C."/>
            <person name="Mikkelsen T.S."/>
            <person name="Zody M.C."/>
            <person name="Asakawa S."/>
            <person name="Taudien S."/>
            <person name="Garber M."/>
            <person name="Kodira C.D."/>
            <person name="Schueler M.G."/>
            <person name="Shimizu A."/>
            <person name="Whittaker C.A."/>
            <person name="Chang J.L."/>
            <person name="Cuomo C.A."/>
            <person name="Dewar K."/>
            <person name="FitzGerald M.G."/>
            <person name="Yang X."/>
            <person name="Allen N.R."/>
            <person name="Anderson S."/>
            <person name="Asakawa T."/>
            <person name="Blechschmidt K."/>
            <person name="Bloom T."/>
            <person name="Borowsky M.L."/>
            <person name="Butler J."/>
            <person name="Cook A."/>
            <person name="Corum B."/>
            <person name="DeArellano K."/>
            <person name="DeCaprio D."/>
            <person name="Dooley K.T."/>
            <person name="Dorris L. III"/>
            <person name="Engels R."/>
            <person name="Gloeckner G."/>
            <person name="Hafez N."/>
            <person name="Hagopian D.S."/>
            <person name="Hall J.L."/>
            <person name="Ishikawa S.K."/>
            <person name="Jaffe D.B."/>
            <person name="Kamat A."/>
            <person name="Kudoh J."/>
            <person name="Lehmann R."/>
            <person name="Lokitsang T."/>
            <person name="Macdonald P."/>
            <person name="Major J.E."/>
            <person name="Matthews C.D."/>
            <person name="Mauceli E."/>
            <person name="Menzel U."/>
            <person name="Mihalev A.H."/>
            <person name="Minoshima S."/>
            <person name="Murayama Y."/>
            <person name="Naylor J.W."/>
            <person name="Nicol R."/>
            <person name="Nguyen C."/>
            <person name="O'Leary S.B."/>
            <person name="O'Neill K."/>
            <person name="Parker S.C.J."/>
            <person name="Polley A."/>
            <person name="Raymond C.K."/>
            <person name="Reichwald K."/>
            <person name="Rodriguez J."/>
            <person name="Sasaki T."/>
            <person name="Schilhabel M."/>
            <person name="Siddiqui R."/>
            <person name="Smith C.L."/>
            <person name="Sneddon T.P."/>
            <person name="Talamas J.A."/>
            <person name="Tenzin P."/>
            <person name="Topham K."/>
            <person name="Venkataraman V."/>
            <person name="Wen G."/>
            <person name="Yamazaki S."/>
            <person name="Young S.K."/>
            <person name="Zeng Q."/>
            <person name="Zimmer A.R."/>
            <person name="Rosenthal A."/>
            <person name="Birren B.W."/>
            <person name="Platzer M."/>
            <person name="Shimizu N."/>
            <person name="Lander E.S."/>
        </authorList>
    </citation>
    <scope>NUCLEOTIDE SEQUENCE [LARGE SCALE GENOMIC DNA]</scope>
</reference>
<reference key="2">
    <citation type="journal article" date="2004" name="Genome Res.">
        <title>The status, quality, and expansion of the NIH full-length cDNA project: the Mammalian Gene Collection (MGC).</title>
        <authorList>
            <consortium name="The MGC Project Team"/>
        </authorList>
    </citation>
    <scope>NUCLEOTIDE SEQUENCE [LARGE SCALE MRNA]</scope>
    <scope>VARIANT VAL-97</scope>
    <source>
        <tissue>Brain</tissue>
    </source>
</reference>
<reference key="3">
    <citation type="journal article" date="2011" name="BMC Syst. Biol.">
        <title>Initial characterization of the human central proteome.</title>
        <authorList>
            <person name="Burkard T.R."/>
            <person name="Planyavsky M."/>
            <person name="Kaupe I."/>
            <person name="Breitwieser F.P."/>
            <person name="Buerckstuemmer T."/>
            <person name="Bennett K.L."/>
            <person name="Superti-Furga G."/>
            <person name="Colinge J."/>
        </authorList>
    </citation>
    <scope>IDENTIFICATION BY MASS SPECTROMETRY [LARGE SCALE ANALYSIS]</scope>
</reference>
<reference key="4">
    <citation type="journal article" date="2015" name="Nat. Commun.">
        <title>Evolutionarily conserved intercalated disc protein Tmem65 regulates cardiac conduction and connexin 43 function.</title>
        <authorList>
            <person name="Sharma P."/>
            <person name="Abbasi C."/>
            <person name="Lazic S."/>
            <person name="Teng A.C."/>
            <person name="Wang D."/>
            <person name="Dubois N."/>
            <person name="Ignatchenko V."/>
            <person name="Wong V."/>
            <person name="Liu J."/>
            <person name="Araki T."/>
            <person name="Tiburcy M."/>
            <person name="Ackerley C."/>
            <person name="Zimmermann W.H."/>
            <person name="Hamilton R."/>
            <person name="Sun Y."/>
            <person name="Liu P.P."/>
            <person name="Keller G."/>
            <person name="Stagljar I."/>
            <person name="Scott I.C."/>
            <person name="Kislinger T."/>
            <person name="Gramolini A.O."/>
        </authorList>
    </citation>
    <scope>SUBUNIT</scope>
    <scope>SUBCELLULAR LOCATION</scope>
    <scope>TOPOLOGY</scope>
    <scope>TISSUE SPECIFICITY</scope>
</reference>
<reference key="5">
    <citation type="journal article" date="2014" name="PeerJ">
        <title>TMEM65 is a mitochondrial inner-membrane protein.</title>
        <authorList>
            <person name="Nishimura N."/>
            <person name="Gotoh T."/>
            <person name="Oike Y."/>
            <person name="Yano M."/>
        </authorList>
    </citation>
    <scope>SUBCELLULAR LOCATION</scope>
</reference>
<reference key="6">
    <citation type="journal article" date="2015" name="Proteomics">
        <title>N-terminome analysis of the human mitochondrial proteome.</title>
        <authorList>
            <person name="Vaca Jacome A.S."/>
            <person name="Rabilloud T."/>
            <person name="Schaeffer-Reiss C."/>
            <person name="Rompais M."/>
            <person name="Ayoub D."/>
            <person name="Lane L."/>
            <person name="Bairoch A."/>
            <person name="Van Dorsselaer A."/>
            <person name="Carapito C."/>
        </authorList>
    </citation>
    <scope>IDENTIFICATION BY MASS SPECTROMETRY [LARGE SCALE ANALYSIS]</scope>
</reference>
<reference key="7">
    <citation type="journal article" date="2017" name="Eur. J. Hum. Genet.">
        <title>A mutation in the TMEM65 gene results in mitochondrial myopathy with severe neurological manifestations.</title>
        <authorList>
            <person name="Nazli A."/>
            <person name="Safdar A."/>
            <person name="Saleem A."/>
            <person name="Akhtar M."/>
            <person name="Brady L.I."/>
            <person name="Schwartzentruber J."/>
            <person name="Tarnopolsky M.A."/>
        </authorList>
    </citation>
    <scope>SUBCELLULAR LOCATION</scope>
    <scope>FUNCTION</scope>
    <scope>INVOLVEMENT IN MITOCHONDRIAL MYOPATHY</scope>
</reference>
<feature type="transit peptide" description="Mitochondrion" evidence="2">
    <location>
        <begin position="1"/>
        <end position="61"/>
    </location>
</feature>
<feature type="chain" id="PRO_0000251404" description="Transmembrane protein 65">
    <location>
        <begin position="62"/>
        <end position="240"/>
    </location>
</feature>
<feature type="topological domain" description="Cytoplasmic" evidence="5">
    <location>
        <begin position="62"/>
        <end position="110"/>
    </location>
</feature>
<feature type="transmembrane region" description="Helical" evidence="2">
    <location>
        <begin position="111"/>
        <end position="131"/>
    </location>
</feature>
<feature type="topological domain" description="Extracellular" evidence="5">
    <location>
        <begin position="132"/>
        <end position="142"/>
    </location>
</feature>
<feature type="transmembrane region" description="Helical" evidence="2">
    <location>
        <begin position="143"/>
        <end position="165"/>
    </location>
</feature>
<feature type="topological domain" description="Cytoplasmic" evidence="5">
    <location>
        <begin position="166"/>
        <end position="209"/>
    </location>
</feature>
<feature type="transmembrane region" description="Helical" evidence="2">
    <location>
        <begin position="210"/>
        <end position="230"/>
    </location>
</feature>
<feature type="topological domain" description="Extracellular" evidence="5">
    <location>
        <begin position="231"/>
        <end position="240"/>
    </location>
</feature>
<feature type="sequence variant" id="VAR_060384" description="In dbSNP:rs17854113." evidence="3">
    <original>I</original>
    <variation>V</variation>
    <location>
        <position position="97"/>
    </location>
</feature>
<feature type="sequence conflict" description="In Ref. 2; AAH41379." evidence="7" ref="2">
    <original>P</original>
    <variation>R</variation>
    <location>
        <position position="6"/>
    </location>
</feature>
<organism>
    <name type="scientific">Homo sapiens</name>
    <name type="common">Human</name>
    <dbReference type="NCBI Taxonomy" id="9606"/>
    <lineage>
        <taxon>Eukaryota</taxon>
        <taxon>Metazoa</taxon>
        <taxon>Chordata</taxon>
        <taxon>Craniata</taxon>
        <taxon>Vertebrata</taxon>
        <taxon>Euteleostomi</taxon>
        <taxon>Mammalia</taxon>
        <taxon>Eutheria</taxon>
        <taxon>Euarchontoglires</taxon>
        <taxon>Primates</taxon>
        <taxon>Haplorrhini</taxon>
        <taxon>Catarrhini</taxon>
        <taxon>Hominidae</taxon>
        <taxon>Homo</taxon>
    </lineage>
</organism>
<sequence length="240" mass="25498">MSRLLPLLRSRTARSLRPGPAAAAAPRPPSWCCCGRGLLALAPPGGLPGGPRRLGTHPKKEPMEALNTAQGARDFIYSLHSTERSCLLKELHRFESIAIAQEKLEAPPPTPGQLRYVFIHNAIPFIGFGFLDNAIMIVAGTHIEMSIGIILGISTMAAAALGNLVSDLAGLGLAGYVEALASRLGLSIPDLTPKQVDMWQTRLSTHLGKAVGVTIGCILGMFPLIFFGGGEEDEKLETKS</sequence>
<gene>
    <name type="primary">TMEM65</name>
</gene>